<protein>
    <recommendedName>
        <fullName evidence="1">Homoserine O-acetyltransferase</fullName>
        <shortName evidence="1 3">HAT</shortName>
        <ecNumber evidence="1 2">2.3.1.31</ecNumber>
    </recommendedName>
    <alternativeName>
        <fullName evidence="1">Homoserine transacetylase</fullName>
        <shortName evidence="1">HTA</shortName>
    </alternativeName>
</protein>
<dbReference type="EC" id="2.3.1.31" evidence="1 2"/>
<dbReference type="EMBL" id="CP000140">
    <property type="protein sequence ID" value="ABR43246.1"/>
    <property type="molecule type" value="Genomic_DNA"/>
</dbReference>
<dbReference type="SMR" id="A6LC32"/>
<dbReference type="STRING" id="435591.BDI_1490"/>
<dbReference type="PaxDb" id="435591-BDI_1490"/>
<dbReference type="KEGG" id="pdi:BDI_1490"/>
<dbReference type="eggNOG" id="COG1897">
    <property type="taxonomic scope" value="Bacteria"/>
</dbReference>
<dbReference type="HOGENOM" id="CLU_057851_0_1_10"/>
<dbReference type="BioCyc" id="PDIS435591:G1G5A-1532-MONOMER"/>
<dbReference type="UniPathway" id="UPA00051">
    <property type="reaction ID" value="UER00074"/>
</dbReference>
<dbReference type="Proteomes" id="UP000000566">
    <property type="component" value="Chromosome"/>
</dbReference>
<dbReference type="GO" id="GO:0005737">
    <property type="term" value="C:cytoplasm"/>
    <property type="evidence" value="ECO:0007669"/>
    <property type="project" value="UniProtKB-SubCell"/>
</dbReference>
<dbReference type="GO" id="GO:0004414">
    <property type="term" value="F:homoserine O-acetyltransferase activity"/>
    <property type="evidence" value="ECO:0007669"/>
    <property type="project" value="UniProtKB-EC"/>
</dbReference>
<dbReference type="GO" id="GO:0008899">
    <property type="term" value="F:homoserine O-succinyltransferase activity"/>
    <property type="evidence" value="ECO:0007669"/>
    <property type="project" value="UniProtKB-UniRule"/>
</dbReference>
<dbReference type="GO" id="GO:0019281">
    <property type="term" value="P:L-methionine biosynthetic process from homoserine via O-succinyl-L-homoserine and cystathionine"/>
    <property type="evidence" value="ECO:0007669"/>
    <property type="project" value="InterPro"/>
</dbReference>
<dbReference type="CDD" id="cd03131">
    <property type="entry name" value="GATase1_HTS"/>
    <property type="match status" value="1"/>
</dbReference>
<dbReference type="FunFam" id="3.40.50.880:FF:000004">
    <property type="entry name" value="Homoserine O-succinyltransferase"/>
    <property type="match status" value="1"/>
</dbReference>
<dbReference type="Gene3D" id="3.40.50.880">
    <property type="match status" value="1"/>
</dbReference>
<dbReference type="HAMAP" id="MF_00295">
    <property type="entry name" value="MetA_acyltransf"/>
    <property type="match status" value="1"/>
</dbReference>
<dbReference type="InterPro" id="IPR029062">
    <property type="entry name" value="Class_I_gatase-like"/>
</dbReference>
<dbReference type="InterPro" id="IPR005697">
    <property type="entry name" value="HST_MetA"/>
</dbReference>
<dbReference type="InterPro" id="IPR033752">
    <property type="entry name" value="MetA_family"/>
</dbReference>
<dbReference type="NCBIfam" id="TIGR01001">
    <property type="entry name" value="metA"/>
    <property type="match status" value="1"/>
</dbReference>
<dbReference type="PANTHER" id="PTHR20919">
    <property type="entry name" value="HOMOSERINE O-SUCCINYLTRANSFERASE"/>
    <property type="match status" value="1"/>
</dbReference>
<dbReference type="PANTHER" id="PTHR20919:SF0">
    <property type="entry name" value="HOMOSERINE O-SUCCINYLTRANSFERASE"/>
    <property type="match status" value="1"/>
</dbReference>
<dbReference type="Pfam" id="PF04204">
    <property type="entry name" value="HTS"/>
    <property type="match status" value="1"/>
</dbReference>
<dbReference type="PIRSF" id="PIRSF000450">
    <property type="entry name" value="H_ser_succinyltr"/>
    <property type="match status" value="1"/>
</dbReference>
<dbReference type="SUPFAM" id="SSF52317">
    <property type="entry name" value="Class I glutamine amidotransferase-like"/>
    <property type="match status" value="1"/>
</dbReference>
<sequence length="310" mass="36464">MPLNLQKNLPAIELLKKEHIFVMDSLRASEQDIRPLRVVVLNLMPLKITTETDLVRLLSNTPLQVELDFMKIKGHTPKNTPIEHMQEFYKDFDEMADDFYDGMIVTGAPVEQMPFEEVSYWEEITQIFDWARTHVTSTLYICWAAQAGLYHFYGVPKYDLPAKMFGVFRHSLREPFVPIFRGFDDEFFVPHSRHTEIRREDIMKVPELTLLSESEESGVYMAMARGGREFFITGHSEYSPYTLNDEYMRDLGKGLPINKPRNYYRNNDPAQGPVVRWRGHANLLFTNWLNYYVYQETPFRREDIKKLGSL</sequence>
<accession>A6LC32</accession>
<name>METAA_PARD8</name>
<evidence type="ECO:0000255" key="1">
    <source>
        <dbReference type="HAMAP-Rule" id="MF_00295"/>
    </source>
</evidence>
<evidence type="ECO:0000269" key="2">
    <source>
    </source>
</evidence>
<evidence type="ECO:0000303" key="3">
    <source>
    </source>
</evidence>
<feature type="chain" id="PRO_1000021822" description="Homoserine O-acetyltransferase">
    <location>
        <begin position="1"/>
        <end position="310"/>
    </location>
</feature>
<feature type="active site" description="Acyl-thioester intermediate" evidence="1">
    <location>
        <position position="142"/>
    </location>
</feature>
<feature type="active site" description="Proton acceptor" evidence="1">
    <location>
        <position position="235"/>
    </location>
</feature>
<feature type="active site" evidence="1">
    <location>
        <position position="237"/>
    </location>
</feature>
<feature type="binding site" evidence="1">
    <location>
        <position position="163"/>
    </location>
    <ligand>
        <name>substrate</name>
    </ligand>
</feature>
<feature type="binding site" evidence="1">
    <location>
        <position position="192"/>
    </location>
    <ligand>
        <name>substrate</name>
    </ligand>
</feature>
<feature type="binding site" evidence="1">
    <location>
        <position position="249"/>
    </location>
    <ligand>
        <name>substrate</name>
    </ligand>
</feature>
<feature type="site" description="Important for acyl-CoA specificity" evidence="1">
    <location>
        <position position="111"/>
    </location>
</feature>
<feature type="site" description="Important for substrate specificity" evidence="1">
    <location>
        <position position="192"/>
    </location>
</feature>
<organism>
    <name type="scientific">Parabacteroides distasonis (strain ATCC 8503 / DSM 20701 / CIP 104284 / JCM 5825 / NCTC 11152)</name>
    <dbReference type="NCBI Taxonomy" id="435591"/>
    <lineage>
        <taxon>Bacteria</taxon>
        <taxon>Pseudomonadati</taxon>
        <taxon>Bacteroidota</taxon>
        <taxon>Bacteroidia</taxon>
        <taxon>Bacteroidales</taxon>
        <taxon>Tannerellaceae</taxon>
        <taxon>Parabacteroides</taxon>
    </lineage>
</organism>
<gene>
    <name evidence="1 3" type="primary">metAA</name>
    <name type="ordered locus">BDI_1490</name>
</gene>
<comment type="function">
    <text evidence="1 2">Transfers an acetyl group from acetyl-CoA to L-homoserine, forming acetyl-L-homoserine.</text>
</comment>
<comment type="catalytic activity">
    <reaction evidence="1 2">
        <text>L-homoserine + acetyl-CoA = O-acetyl-L-homoserine + CoA</text>
        <dbReference type="Rhea" id="RHEA:13701"/>
        <dbReference type="ChEBI" id="CHEBI:57287"/>
        <dbReference type="ChEBI" id="CHEBI:57288"/>
        <dbReference type="ChEBI" id="CHEBI:57476"/>
        <dbReference type="ChEBI" id="CHEBI:57716"/>
        <dbReference type="EC" id="2.3.1.31"/>
    </reaction>
</comment>
<comment type="pathway">
    <text evidence="1">Amino-acid biosynthesis; L-methionine biosynthesis via de novo pathway; O-acetyl-L-homoserine from L-homoserine: step 1/1.</text>
</comment>
<comment type="subcellular location">
    <subcellularLocation>
        <location evidence="1">Cytoplasm</location>
    </subcellularLocation>
</comment>
<comment type="similarity">
    <text evidence="1">Belongs to the MetA family.</text>
</comment>
<keyword id="KW-0012">Acyltransferase</keyword>
<keyword id="KW-0028">Amino-acid biosynthesis</keyword>
<keyword id="KW-0963">Cytoplasm</keyword>
<keyword id="KW-0486">Methionine biosynthesis</keyword>
<keyword id="KW-1185">Reference proteome</keyword>
<keyword id="KW-0808">Transferase</keyword>
<proteinExistence type="evidence at protein level"/>
<reference key="1">
    <citation type="journal article" date="2007" name="PLoS Biol.">
        <title>Evolution of symbiotic bacteria in the distal human intestine.</title>
        <authorList>
            <person name="Xu J."/>
            <person name="Mahowald M.A."/>
            <person name="Ley R.E."/>
            <person name="Lozupone C.A."/>
            <person name="Hamady M."/>
            <person name="Martens E.C."/>
            <person name="Henrissat B."/>
            <person name="Coutinho P.M."/>
            <person name="Minx P."/>
            <person name="Latreille P."/>
            <person name="Cordum H."/>
            <person name="Van Brunt A."/>
            <person name="Kim K."/>
            <person name="Fulton R.S."/>
            <person name="Fulton L.A."/>
            <person name="Clifton S.W."/>
            <person name="Wilson R.K."/>
            <person name="Knight R.D."/>
            <person name="Gordon J.I."/>
        </authorList>
    </citation>
    <scope>NUCLEOTIDE SEQUENCE [LARGE SCALE GENOMIC DNA]</scope>
    <source>
        <strain>ATCC 8503 / DSM 20701 / CIP 104284 / JCM 5825 / NCTC 11152</strain>
    </source>
</reference>
<reference key="2">
    <citation type="journal article" date="2017" name="Nat. Chem. Biol.">
        <title>Parallel evolution of non-homologous isofunctional enzymes in methionine biosynthesis.</title>
        <authorList>
            <person name="Bastard K."/>
            <person name="Perret A."/>
            <person name="Mariage A."/>
            <person name="Bessonnet T."/>
            <person name="Pinet-Turpault A."/>
            <person name="Petit J.L."/>
            <person name="Darii E."/>
            <person name="Bazire P."/>
            <person name="Vergne-Vaxelaire C."/>
            <person name="Brewee C."/>
            <person name="Debard A."/>
            <person name="Pellouin V."/>
            <person name="Besnard-Gonnet M."/>
            <person name="Artiguenave F."/>
            <person name="Medigue C."/>
            <person name="Vallenet D."/>
            <person name="Danchin A."/>
            <person name="Zaparucha A."/>
            <person name="Weissenbach J."/>
            <person name="Salanoubat M."/>
            <person name="de Berardinis V."/>
        </authorList>
    </citation>
    <scope>FUNCTION</scope>
    <scope>CATALYTIC ACTIVITY</scope>
</reference>